<evidence type="ECO:0000255" key="1">
    <source>
        <dbReference type="HAMAP-Rule" id="MF_04065"/>
    </source>
</evidence>
<evidence type="ECO:0000256" key="2">
    <source>
        <dbReference type="SAM" id="MobiDB-lite"/>
    </source>
</evidence>
<organismHost>
    <name type="scientific">Aves</name>
    <dbReference type="NCBI Taxonomy" id="8782"/>
</organismHost>
<organismHost>
    <name type="scientific">Felis catus</name>
    <name type="common">Cat</name>
    <name type="synonym">Felis silvestris catus</name>
    <dbReference type="NCBI Taxonomy" id="9685"/>
</organismHost>
<organismHost>
    <name type="scientific">Homo sapiens</name>
    <name type="common">Human</name>
    <dbReference type="NCBI Taxonomy" id="9606"/>
</organismHost>
<organismHost>
    <name type="scientific">Panthera pardus</name>
    <name type="common">Leopard</name>
    <name type="synonym">Felis pardus</name>
    <dbReference type="NCBI Taxonomy" id="9691"/>
</organismHost>
<organismHost>
    <name type="scientific">Panthera tigris</name>
    <name type="common">Tiger</name>
    <dbReference type="NCBI Taxonomy" id="9694"/>
</organismHost>
<organismHost>
    <name type="scientific">Sus scrofa</name>
    <name type="common">Pig</name>
    <dbReference type="NCBI Taxonomy" id="9823"/>
</organismHost>
<proteinExistence type="inferred from homology"/>
<sequence>MDVNPTLLFLKVPVQNAISTTFPYTGDPPYSHGTGTGYTMDTVNRTHQYSEKGKWTTNTETGAPQLNPIDGPLPEDNEPSGYAQTDCVLEAMAFLEESHPGIFENSCLETMEIVQQTRVDKLTQGRQTYDWTLNRNQPAATALANTIEIFRSNGLTANESGRLIDFLKDVMESMDKEEMEITTHFQRKRRVRDNMTKKMVTQRTIGKKKQRLNKKSYLIRALTLNTMTKDAERGKLKRRAIATPGMQIRGFVYFVETLARSICEKLEQSGLPVGGNEKKAKLANVVRKMMTNSQDTELSFTITGDNTKWNENQNPRMFLAMITYITRNQPEWFRNVLSIAPIMFSNKMARLGKGYMFESKSMKLRTQIPAEMLANIDLKYFNELTKKKIDKIRPLLIDGTASLSPGMMMGMFNMLSTVLGVSILNLGQKRCTKTTYWWDGLQSSDDFALIVNAPNHEGIQAGVDRFYRTCKLVGINMSKKKSYINRTGTFEFTSFFYRYGFVANFSMELPSFGVSGINESADMSIGVTVIKNNMINNDLGPATAQMALQLFIKDYRYTYRCHRGDTQIQTRRSFELKKLWEQTRSKAGLLVSDGGPNLYNIRNLHIPEVCLKWELMDEDYQGRLCNPLNPFVSHKEIESVNNAVVMPAHGPAKSMEYDAVATTHSWIPKRNRSILNTSQRGILEDEQMYQKCCNLFEKFFPSSSYRRPVGISSMVEAMVSRARIDARIDFESGRIKKEEFAEIMKICSTIEELRRQK</sequence>
<name>RDRP_I02A6</name>
<organism>
    <name type="scientific">Influenza A virus (strain A/Chicken/Hong Kong/YU22/2002 H5N1 genotype Z)</name>
    <dbReference type="NCBI Taxonomy" id="284177"/>
    <lineage>
        <taxon>Viruses</taxon>
        <taxon>Riboviria</taxon>
        <taxon>Orthornavirae</taxon>
        <taxon>Negarnaviricota</taxon>
        <taxon>Polyploviricotina</taxon>
        <taxon>Insthoviricetes</taxon>
        <taxon>Articulavirales</taxon>
        <taxon>Orthomyxoviridae</taxon>
        <taxon>Alphainfluenzavirus</taxon>
        <taxon>Alphainfluenzavirus influenzae</taxon>
        <taxon>Influenza A virus</taxon>
    </lineage>
</organism>
<comment type="function">
    <text evidence="1">RNA-dependent RNA polymerase which is responsible for replication and transcription of virus RNA segments. The transcription of viral mRNAs occurs by a unique mechanism called cap-snatching. 5' methylated caps of cellular mRNAs are cleaved after 10-13 nucleotides by PA. In turn, these short capped RNAs are used as primers by PB1 for transcription of viral mRNAs. During virus replication, PB1 initiates RNA synthesis and copy vRNA into complementary RNA (cRNA) which in turn serves as a template for the production of more vRNAs.</text>
</comment>
<comment type="catalytic activity">
    <reaction evidence="1">
        <text>RNA(n) + a ribonucleoside 5'-triphosphate = RNA(n+1) + diphosphate</text>
        <dbReference type="Rhea" id="RHEA:21248"/>
        <dbReference type="Rhea" id="RHEA-COMP:14527"/>
        <dbReference type="Rhea" id="RHEA-COMP:17342"/>
        <dbReference type="ChEBI" id="CHEBI:33019"/>
        <dbReference type="ChEBI" id="CHEBI:61557"/>
        <dbReference type="ChEBI" id="CHEBI:140395"/>
        <dbReference type="EC" id="2.7.7.48"/>
    </reaction>
</comment>
<comment type="subunit">
    <text evidence="1">Influenza RNA polymerase is composed of three subunits: PB1, PB2 and PA. Interacts (via N-terminus) with PA (via C-terminus). Interacts (via C-terminus) with PB2 (via N-terminus); this interaction is essential for transcription initiation.</text>
</comment>
<comment type="subcellular location">
    <subcellularLocation>
        <location evidence="1">Host nucleus</location>
    </subcellularLocation>
    <subcellularLocation>
        <location evidence="1">Host cytoplasm</location>
    </subcellularLocation>
</comment>
<comment type="PTM">
    <text evidence="1">Phosphorylated by host PRKCA.</text>
</comment>
<comment type="similarity">
    <text evidence="1">Belongs to the influenza viruses polymerase PB1 family.</text>
</comment>
<dbReference type="EC" id="2.7.7.48" evidence="1"/>
<dbReference type="EMBL" id="AY651680">
    <property type="protein sequence ID" value="AAT73511.2"/>
    <property type="molecule type" value="Genomic_RNA"/>
</dbReference>
<dbReference type="SMR" id="Q6DNS2"/>
<dbReference type="GO" id="GO:0030430">
    <property type="term" value="C:host cell cytoplasm"/>
    <property type="evidence" value="ECO:0007669"/>
    <property type="project" value="UniProtKB-SubCell"/>
</dbReference>
<dbReference type="GO" id="GO:0042025">
    <property type="term" value="C:host cell nucleus"/>
    <property type="evidence" value="ECO:0007669"/>
    <property type="project" value="UniProtKB-SubCell"/>
</dbReference>
<dbReference type="GO" id="GO:0000166">
    <property type="term" value="F:nucleotide binding"/>
    <property type="evidence" value="ECO:0007669"/>
    <property type="project" value="UniProtKB-UniRule"/>
</dbReference>
<dbReference type="GO" id="GO:0003723">
    <property type="term" value="F:RNA binding"/>
    <property type="evidence" value="ECO:0007669"/>
    <property type="project" value="InterPro"/>
</dbReference>
<dbReference type="GO" id="GO:0003968">
    <property type="term" value="F:RNA-directed RNA polymerase activity"/>
    <property type="evidence" value="ECO:0007669"/>
    <property type="project" value="UniProtKB-UniRule"/>
</dbReference>
<dbReference type="GO" id="GO:0006351">
    <property type="term" value="P:DNA-templated transcription"/>
    <property type="evidence" value="ECO:0007669"/>
    <property type="project" value="UniProtKB-UniRule"/>
</dbReference>
<dbReference type="GO" id="GO:0039657">
    <property type="term" value="P:symbiont-mediated suppression of host gene expression"/>
    <property type="evidence" value="ECO:0007669"/>
    <property type="project" value="UniProtKB-KW"/>
</dbReference>
<dbReference type="GO" id="GO:0039523">
    <property type="term" value="P:symbiont-mediated suppression of host mRNA transcription via inhibition of RNA polymerase II activity"/>
    <property type="evidence" value="ECO:0007669"/>
    <property type="project" value="UniProtKB-UniRule"/>
</dbReference>
<dbReference type="GO" id="GO:0039694">
    <property type="term" value="P:viral RNA genome replication"/>
    <property type="evidence" value="ECO:0007669"/>
    <property type="project" value="UniProtKB-UniRule"/>
</dbReference>
<dbReference type="GO" id="GO:0019083">
    <property type="term" value="P:viral transcription"/>
    <property type="evidence" value="ECO:0007669"/>
    <property type="project" value="UniProtKB-KW"/>
</dbReference>
<dbReference type="Gene3D" id="6.10.140.720">
    <property type="match status" value="1"/>
</dbReference>
<dbReference type="HAMAP" id="MF_04065">
    <property type="entry name" value="INFV_RDRP"/>
    <property type="match status" value="1"/>
</dbReference>
<dbReference type="InterPro" id="IPR007099">
    <property type="entry name" value="RNA-dir_pol_NSvirus"/>
</dbReference>
<dbReference type="InterPro" id="IPR001407">
    <property type="entry name" value="RNA_pol_PB1_influenza"/>
</dbReference>
<dbReference type="Pfam" id="PF00602">
    <property type="entry name" value="Flu_PB1"/>
    <property type="match status" value="1"/>
</dbReference>
<dbReference type="PIRSF" id="PIRSF000827">
    <property type="entry name" value="RdRPol_OMV"/>
    <property type="match status" value="1"/>
</dbReference>
<dbReference type="PROSITE" id="PS50525">
    <property type="entry name" value="RDRP_SSRNA_NEG_SEG"/>
    <property type="match status" value="1"/>
</dbReference>
<protein>
    <recommendedName>
        <fullName evidence="1">RNA-directed RNA polymerase catalytic subunit</fullName>
        <ecNumber evidence="1">2.7.7.48</ecNumber>
    </recommendedName>
    <alternativeName>
        <fullName evidence="1">Polymerase basic protein 1</fullName>
        <shortName evidence="1">PB1</shortName>
    </alternativeName>
    <alternativeName>
        <fullName evidence="1">RNA-directed RNA polymerase subunit P1</fullName>
    </alternativeName>
</protein>
<accession>Q6DNS2</accession>
<reference key="1">
    <citation type="journal article" date="2004" name="Nature">
        <title>Genesis of a highly pathogenic and potentially pandemic H5N1 influenza virus in eastern Asia.</title>
        <authorList>
            <person name="Li K.S."/>
            <person name="Guan Y."/>
            <person name="Wang J."/>
            <person name="Smith G.J.D."/>
            <person name="Xu K.M."/>
            <person name="Duan L."/>
            <person name="Rahardjo A.P."/>
            <person name="Puthavathana P."/>
            <person name="Buranathai C."/>
            <person name="Nguyen T.D."/>
            <person name="Estoepangestie A.T.S."/>
            <person name="Chaisingh A."/>
            <person name="Auewarakul P."/>
            <person name="Long H.T."/>
            <person name="Hanh N.T.H."/>
            <person name="Webby R.J."/>
            <person name="Poon L.L.M."/>
            <person name="Chen H."/>
            <person name="Shortridge K.F."/>
            <person name="Yuen K.Y."/>
            <person name="Webster R.G."/>
            <person name="Peiris J.S.M."/>
        </authorList>
    </citation>
    <scope>NUCLEOTIDE SEQUENCE [GENOMIC RNA]</scope>
</reference>
<reference key="2">
    <citation type="submission" date="2008-03" db="EMBL/GenBank/DDBJ databases">
        <authorList>
            <person name="Li K.S."/>
            <person name="Guan Y."/>
            <person name="Wang J."/>
            <person name="Smith G.J.D."/>
            <person name="Xu K.M."/>
            <person name="Duan L."/>
            <person name="Rahardjo A.P."/>
            <person name="Puthavathana P."/>
            <person name="Buranathai C."/>
            <person name="Nguyen T.D."/>
            <person name="Estoepangestie A.T.S."/>
            <person name="Chaisingh A."/>
            <person name="Auewarakul P."/>
            <person name="Long H.T."/>
            <person name="Hanh N.T.H."/>
            <person name="Lim W."/>
            <person name="Webby R.J."/>
            <person name="Poon L.L.M."/>
            <person name="Chen H."/>
            <person name="Shortridge K.F."/>
            <person name="Yuen K.Y."/>
            <person name="Webster R.G."/>
            <person name="Peiris J.S.M."/>
        </authorList>
    </citation>
    <scope>SEQUENCE REVISION</scope>
</reference>
<feature type="chain" id="PRO_0000311168" description="RNA-directed RNA polymerase catalytic subunit">
    <location>
        <begin position="1"/>
        <end position="757"/>
    </location>
</feature>
<feature type="domain" description="RdRp catalytic" evidence="1">
    <location>
        <begin position="286"/>
        <end position="483"/>
    </location>
</feature>
<feature type="region of interest" description="Disordered" evidence="2">
    <location>
        <begin position="52"/>
        <end position="82"/>
    </location>
</feature>
<feature type="region of interest" description="Promoter-binding site" evidence="1">
    <location>
        <begin position="249"/>
        <end position="256"/>
    </location>
</feature>
<feature type="short sequence motif" description="Nuclear localization signal" evidence="1">
    <location>
        <begin position="187"/>
        <end position="195"/>
    </location>
</feature>
<feature type="short sequence motif" description="Nuclear localization signal" evidence="1">
    <location>
        <begin position="203"/>
        <end position="216"/>
    </location>
</feature>
<feature type="compositionally biased region" description="Polar residues" evidence="2">
    <location>
        <begin position="55"/>
        <end position="64"/>
    </location>
</feature>
<keyword id="KW-1262">Eukaryotic host gene expression shutoff by virus</keyword>
<keyword id="KW-1191">Eukaryotic host transcription shutoff by virus</keyword>
<keyword id="KW-1035">Host cytoplasm</keyword>
<keyword id="KW-1190">Host gene expression shutoff by virus</keyword>
<keyword id="KW-1048">Host nucleus</keyword>
<keyword id="KW-0945">Host-virus interaction</keyword>
<keyword id="KW-1104">Inhibition of host RNA polymerase II by virus</keyword>
<keyword id="KW-0547">Nucleotide-binding</keyword>
<keyword id="KW-0548">Nucleotidyltransferase</keyword>
<keyword id="KW-0597">Phosphoprotein</keyword>
<keyword id="KW-0696">RNA-directed RNA polymerase</keyword>
<keyword id="KW-0808">Transferase</keyword>
<keyword id="KW-0693">Viral RNA replication</keyword>
<keyword id="KW-1195">Viral transcription</keyword>
<gene>
    <name evidence="1" type="primary">PB1</name>
</gene>